<sequence length="191" mass="20904">MSAANATGEGQDAIAWNREMLPPGPEQDAVIKGITGEITEKGFVVASLDKLVNWGRTGSLWPMSFGLACCAVEMIHAYMPRYDLDRMGIIPRGSPRQSDVMIVAGTLTNKMAPALRRVYDQMAEPRWVISMGSCANGGGYYHYSYSVVRGCDRIVPVDVYVPGCPPTAEALIYGIFQLQKKIRRTGTILRG</sequence>
<gene>
    <name evidence="2" type="primary">nuoB2</name>
    <name type="ordered locus">GDI3039</name>
    <name type="ordered locus">Gdia_3329</name>
</gene>
<organism>
    <name type="scientific">Gluconacetobacter diazotrophicus (strain ATCC 49037 / DSM 5601 / CCUG 37298 / CIP 103539 / LMG 7603 / PAl5)</name>
    <dbReference type="NCBI Taxonomy" id="272568"/>
    <lineage>
        <taxon>Bacteria</taxon>
        <taxon>Pseudomonadati</taxon>
        <taxon>Pseudomonadota</taxon>
        <taxon>Alphaproteobacteria</taxon>
        <taxon>Acetobacterales</taxon>
        <taxon>Acetobacteraceae</taxon>
        <taxon>Gluconacetobacter</taxon>
    </lineage>
</organism>
<name>NUOB2_GLUDA</name>
<dbReference type="EC" id="7.1.1.-" evidence="2"/>
<dbReference type="EMBL" id="AM889285">
    <property type="protein sequence ID" value="CAP56982.1"/>
    <property type="molecule type" value="Genomic_DNA"/>
</dbReference>
<dbReference type="EMBL" id="CP001189">
    <property type="protein sequence ID" value="ACI53056.1"/>
    <property type="molecule type" value="Genomic_DNA"/>
</dbReference>
<dbReference type="RefSeq" id="WP_012227329.1">
    <property type="nucleotide sequence ID" value="NC_010125.1"/>
</dbReference>
<dbReference type="SMR" id="A9HRU3"/>
<dbReference type="STRING" id="272568.GDI3039"/>
<dbReference type="KEGG" id="gdi:GDI3039"/>
<dbReference type="KEGG" id="gdj:Gdia_3329"/>
<dbReference type="eggNOG" id="COG0377">
    <property type="taxonomic scope" value="Bacteria"/>
</dbReference>
<dbReference type="HOGENOM" id="CLU_055737_7_0_5"/>
<dbReference type="OrthoDB" id="9786737at2"/>
<dbReference type="Proteomes" id="UP000001176">
    <property type="component" value="Chromosome"/>
</dbReference>
<dbReference type="GO" id="GO:0005886">
    <property type="term" value="C:plasma membrane"/>
    <property type="evidence" value="ECO:0007669"/>
    <property type="project" value="UniProtKB-SubCell"/>
</dbReference>
<dbReference type="GO" id="GO:0045271">
    <property type="term" value="C:respiratory chain complex I"/>
    <property type="evidence" value="ECO:0007669"/>
    <property type="project" value="TreeGrafter"/>
</dbReference>
<dbReference type="GO" id="GO:0051539">
    <property type="term" value="F:4 iron, 4 sulfur cluster binding"/>
    <property type="evidence" value="ECO:0007669"/>
    <property type="project" value="UniProtKB-KW"/>
</dbReference>
<dbReference type="GO" id="GO:0005506">
    <property type="term" value="F:iron ion binding"/>
    <property type="evidence" value="ECO:0007669"/>
    <property type="project" value="UniProtKB-UniRule"/>
</dbReference>
<dbReference type="GO" id="GO:0008137">
    <property type="term" value="F:NADH dehydrogenase (ubiquinone) activity"/>
    <property type="evidence" value="ECO:0007669"/>
    <property type="project" value="InterPro"/>
</dbReference>
<dbReference type="GO" id="GO:0050136">
    <property type="term" value="F:NADH:ubiquinone reductase (non-electrogenic) activity"/>
    <property type="evidence" value="ECO:0007669"/>
    <property type="project" value="UniProtKB-UniRule"/>
</dbReference>
<dbReference type="GO" id="GO:0048038">
    <property type="term" value="F:quinone binding"/>
    <property type="evidence" value="ECO:0007669"/>
    <property type="project" value="UniProtKB-KW"/>
</dbReference>
<dbReference type="GO" id="GO:0009060">
    <property type="term" value="P:aerobic respiration"/>
    <property type="evidence" value="ECO:0007669"/>
    <property type="project" value="TreeGrafter"/>
</dbReference>
<dbReference type="GO" id="GO:0015990">
    <property type="term" value="P:electron transport coupled proton transport"/>
    <property type="evidence" value="ECO:0007669"/>
    <property type="project" value="TreeGrafter"/>
</dbReference>
<dbReference type="FunFam" id="3.40.50.12280:FF:000001">
    <property type="entry name" value="NADH-quinone oxidoreductase subunit B 2"/>
    <property type="match status" value="1"/>
</dbReference>
<dbReference type="Gene3D" id="3.40.50.12280">
    <property type="match status" value="1"/>
</dbReference>
<dbReference type="HAMAP" id="MF_01356">
    <property type="entry name" value="NDH1_NuoB"/>
    <property type="match status" value="1"/>
</dbReference>
<dbReference type="InterPro" id="IPR006137">
    <property type="entry name" value="NADH_UbQ_OxRdtase-like_20kDa"/>
</dbReference>
<dbReference type="InterPro" id="IPR006138">
    <property type="entry name" value="NADH_UQ_OxRdtase_20Kd_su"/>
</dbReference>
<dbReference type="NCBIfam" id="TIGR01957">
    <property type="entry name" value="nuoB_fam"/>
    <property type="match status" value="1"/>
</dbReference>
<dbReference type="NCBIfam" id="NF005012">
    <property type="entry name" value="PRK06411.1"/>
    <property type="match status" value="1"/>
</dbReference>
<dbReference type="PANTHER" id="PTHR11995">
    <property type="entry name" value="NADH DEHYDROGENASE"/>
    <property type="match status" value="1"/>
</dbReference>
<dbReference type="PANTHER" id="PTHR11995:SF14">
    <property type="entry name" value="NADH DEHYDROGENASE [UBIQUINONE] IRON-SULFUR PROTEIN 7, MITOCHONDRIAL"/>
    <property type="match status" value="1"/>
</dbReference>
<dbReference type="Pfam" id="PF01058">
    <property type="entry name" value="Oxidored_q6"/>
    <property type="match status" value="1"/>
</dbReference>
<dbReference type="SUPFAM" id="SSF56770">
    <property type="entry name" value="HydA/Nqo6-like"/>
    <property type="match status" value="1"/>
</dbReference>
<dbReference type="PROSITE" id="PS01150">
    <property type="entry name" value="COMPLEX1_20K"/>
    <property type="match status" value="1"/>
</dbReference>
<feature type="chain" id="PRO_0000358410" description="NADH-quinone oxidoreductase subunit B 2">
    <location>
        <begin position="1"/>
        <end position="191"/>
    </location>
</feature>
<feature type="binding site" evidence="2">
    <location>
        <position position="69"/>
    </location>
    <ligand>
        <name>[4Fe-4S] cluster</name>
        <dbReference type="ChEBI" id="CHEBI:49883"/>
    </ligand>
</feature>
<feature type="binding site" evidence="2">
    <location>
        <position position="70"/>
    </location>
    <ligand>
        <name>[4Fe-4S] cluster</name>
        <dbReference type="ChEBI" id="CHEBI:49883"/>
    </ligand>
</feature>
<feature type="binding site" evidence="2">
    <location>
        <position position="134"/>
    </location>
    <ligand>
        <name>[4Fe-4S] cluster</name>
        <dbReference type="ChEBI" id="CHEBI:49883"/>
    </ligand>
</feature>
<feature type="binding site" evidence="2">
    <location>
        <position position="164"/>
    </location>
    <ligand>
        <name>[4Fe-4S] cluster</name>
        <dbReference type="ChEBI" id="CHEBI:49883"/>
    </ligand>
</feature>
<reference key="1">
    <citation type="journal article" date="2009" name="BMC Genomics">
        <title>Complete genome sequence of the sugarcane nitrogen-fixing endophyte Gluconacetobacter diazotrophicus Pal5.</title>
        <authorList>
            <person name="Bertalan M."/>
            <person name="Albano R."/>
            <person name="de Padua V."/>
            <person name="Rouws L."/>
            <person name="Rojas C."/>
            <person name="Hemerly A."/>
            <person name="Teixeira K."/>
            <person name="Schwab S."/>
            <person name="Araujo J."/>
            <person name="Oliveira A."/>
            <person name="Franca L."/>
            <person name="Magalhaes V."/>
            <person name="Alqueres S."/>
            <person name="Cardoso A."/>
            <person name="Almeida W."/>
            <person name="Loureiro M.M."/>
            <person name="Nogueira E."/>
            <person name="Cidade D."/>
            <person name="Oliveira D."/>
            <person name="Simao T."/>
            <person name="Macedo J."/>
            <person name="Valadao A."/>
            <person name="Dreschsel M."/>
            <person name="Freitas F."/>
            <person name="Vidal M."/>
            <person name="Guedes H."/>
            <person name="Rodrigues E."/>
            <person name="Meneses C."/>
            <person name="Brioso P."/>
            <person name="Pozzer L."/>
            <person name="Figueiredo D."/>
            <person name="Montano H."/>
            <person name="Junior J."/>
            <person name="de Souza Filho G."/>
            <person name="Martin Quintana Flores V."/>
            <person name="Ferreira B."/>
            <person name="Branco A."/>
            <person name="Gonzalez P."/>
            <person name="Guillobel H."/>
            <person name="Lemos M."/>
            <person name="Seibel L."/>
            <person name="Macedo J."/>
            <person name="Alves-Ferreira M."/>
            <person name="Sachetto-Martins G."/>
            <person name="Coelho A."/>
            <person name="Santos E."/>
            <person name="Amaral G."/>
            <person name="Neves A."/>
            <person name="Pacheco A.B."/>
            <person name="Carvalho D."/>
            <person name="Lery L."/>
            <person name="Bisch P."/>
            <person name="Rossle S.C."/>
            <person name="Urmenyi T."/>
            <person name="Rael Pereira A."/>
            <person name="Silva R."/>
            <person name="Rondinelli E."/>
            <person name="von Kruger W."/>
            <person name="Martins O."/>
            <person name="Baldani J.I."/>
            <person name="Ferreira P.C."/>
        </authorList>
    </citation>
    <scope>NUCLEOTIDE SEQUENCE [LARGE SCALE GENOMIC DNA]</scope>
    <source>
        <strain>ATCC 49037 / DSM 5601 / CCUG 37298 / CIP 103539 / LMG 7603 / PAl5</strain>
    </source>
</reference>
<reference key="2">
    <citation type="journal article" date="2010" name="Stand. Genomic Sci.">
        <title>Two genome sequences of the same bacterial strain, Gluconacetobacter diazotrophicus PAl 5, suggest a new standard in genome sequence submission.</title>
        <authorList>
            <person name="Giongo A."/>
            <person name="Tyler H.L."/>
            <person name="Zipperer U.N."/>
            <person name="Triplett E.W."/>
        </authorList>
    </citation>
    <scope>NUCLEOTIDE SEQUENCE [LARGE SCALE GENOMIC DNA]</scope>
    <source>
        <strain>ATCC 49037 / DSM 5601 / CCUG 37298 / CIP 103539 / LMG 7603 / PAl5</strain>
    </source>
</reference>
<accession>A9HRU3</accession>
<evidence type="ECO:0000250" key="1"/>
<evidence type="ECO:0000255" key="2">
    <source>
        <dbReference type="HAMAP-Rule" id="MF_01356"/>
    </source>
</evidence>
<keyword id="KW-0004">4Fe-4S</keyword>
<keyword id="KW-0997">Cell inner membrane</keyword>
<keyword id="KW-1003">Cell membrane</keyword>
<keyword id="KW-0408">Iron</keyword>
<keyword id="KW-0411">Iron-sulfur</keyword>
<keyword id="KW-0472">Membrane</keyword>
<keyword id="KW-0479">Metal-binding</keyword>
<keyword id="KW-0520">NAD</keyword>
<keyword id="KW-0874">Quinone</keyword>
<keyword id="KW-1185">Reference proteome</keyword>
<keyword id="KW-1278">Translocase</keyword>
<keyword id="KW-0813">Transport</keyword>
<keyword id="KW-0830">Ubiquinone</keyword>
<proteinExistence type="inferred from homology"/>
<comment type="function">
    <text evidence="1">NDH-1 shuttles electrons from NADH, via FMN and iron-sulfur (Fe-S) centers, to quinones in the respiratory chain. Couples the redox reaction to proton translocation (for every two electrons transferred, four hydrogen ions are translocated across the cytoplasmic membrane), and thus conserves the redox energy in a proton gradient (By similarity).</text>
</comment>
<comment type="catalytic activity">
    <reaction evidence="2">
        <text>a quinone + NADH + 5 H(+)(in) = a quinol + NAD(+) + 4 H(+)(out)</text>
        <dbReference type="Rhea" id="RHEA:57888"/>
        <dbReference type="ChEBI" id="CHEBI:15378"/>
        <dbReference type="ChEBI" id="CHEBI:24646"/>
        <dbReference type="ChEBI" id="CHEBI:57540"/>
        <dbReference type="ChEBI" id="CHEBI:57945"/>
        <dbReference type="ChEBI" id="CHEBI:132124"/>
    </reaction>
</comment>
<comment type="cofactor">
    <cofactor evidence="2">
        <name>[4Fe-4S] cluster</name>
        <dbReference type="ChEBI" id="CHEBI:49883"/>
    </cofactor>
    <text evidence="2">Binds 1 [4Fe-4S] cluster.</text>
</comment>
<comment type="subunit">
    <text evidence="2">NDH-1 is composed of 14 different subunits. Subunits NuoB, C, D, E, F, and G constitute the peripheral sector of the complex.</text>
</comment>
<comment type="subcellular location">
    <subcellularLocation>
        <location evidence="2">Cell inner membrane</location>
        <topology evidence="2">Peripheral membrane protein</topology>
        <orientation evidence="2">Cytoplasmic side</orientation>
    </subcellularLocation>
</comment>
<comment type="similarity">
    <text evidence="2">Belongs to the complex I 20 kDa subunit family.</text>
</comment>
<protein>
    <recommendedName>
        <fullName evidence="2">NADH-quinone oxidoreductase subunit B 2</fullName>
        <ecNumber evidence="2">7.1.1.-</ecNumber>
    </recommendedName>
    <alternativeName>
        <fullName evidence="2">NADH dehydrogenase I subunit B 2</fullName>
    </alternativeName>
    <alternativeName>
        <fullName evidence="2">NDH-1 subunit B 2</fullName>
    </alternativeName>
</protein>